<evidence type="ECO:0000255" key="1">
    <source>
        <dbReference type="HAMAP-Rule" id="MF_00600"/>
    </source>
</evidence>
<evidence type="ECO:0000256" key="2">
    <source>
        <dbReference type="SAM" id="MobiDB-lite"/>
    </source>
</evidence>
<keyword id="KW-0067">ATP-binding</keyword>
<keyword id="KW-0143">Chaperone</keyword>
<keyword id="KW-0963">Cytoplasm</keyword>
<keyword id="KW-0413">Isomerase</keyword>
<keyword id="KW-0547">Nucleotide-binding</keyword>
<comment type="function">
    <text evidence="1">Together with its co-chaperonin GroES, plays an essential role in assisting protein folding. The GroEL-GroES system forms a nano-cage that allows encapsulation of the non-native substrate proteins and provides a physical environment optimized to promote and accelerate protein folding.</text>
</comment>
<comment type="catalytic activity">
    <reaction evidence="1">
        <text>ATP + H2O + a folded polypeptide = ADP + phosphate + an unfolded polypeptide.</text>
        <dbReference type="EC" id="5.6.1.7"/>
    </reaction>
</comment>
<comment type="subunit">
    <text evidence="1">Forms a cylinder of 14 subunits composed of two heptameric rings stacked back-to-back. Interacts with the co-chaperonin GroES.</text>
</comment>
<comment type="subcellular location">
    <subcellularLocation>
        <location evidence="1">Cytoplasm</location>
    </subcellularLocation>
</comment>
<comment type="similarity">
    <text evidence="1">Belongs to the chaperonin (HSP60) family.</text>
</comment>
<accession>Q0BHT1</accession>
<reference key="1">
    <citation type="submission" date="2006-08" db="EMBL/GenBank/DDBJ databases">
        <title>Complete sequence of chromosome 1 of Burkholderia cepacia AMMD.</title>
        <authorList>
            <person name="Copeland A."/>
            <person name="Lucas S."/>
            <person name="Lapidus A."/>
            <person name="Barry K."/>
            <person name="Detter J.C."/>
            <person name="Glavina del Rio T."/>
            <person name="Hammon N."/>
            <person name="Israni S."/>
            <person name="Pitluck S."/>
            <person name="Bruce D."/>
            <person name="Chain P."/>
            <person name="Malfatti S."/>
            <person name="Shin M."/>
            <person name="Vergez L."/>
            <person name="Schmutz J."/>
            <person name="Larimer F."/>
            <person name="Land M."/>
            <person name="Hauser L."/>
            <person name="Kyrpides N."/>
            <person name="Kim E."/>
            <person name="Parke J."/>
            <person name="Coenye T."/>
            <person name="Konstantinidis K."/>
            <person name="Ramette A."/>
            <person name="Tiedje J."/>
            <person name="Richardson P."/>
        </authorList>
    </citation>
    <scope>NUCLEOTIDE SEQUENCE [LARGE SCALE GENOMIC DNA]</scope>
    <source>
        <strain>ATCC BAA-244 / DSM 16087 / CCUG 44356 / LMG 19182 / AMMD</strain>
    </source>
</reference>
<gene>
    <name evidence="1" type="primary">groEL1</name>
    <name evidence="1" type="synonym">groL1</name>
    <name type="ordered locus">Bamb_0733</name>
</gene>
<sequence>MAAKDVVFGDSARSKMVEGVNILANAVKVTLGPKGRNVVLERSFGGPTVTKDGVSVAKEIELKDKLQNMGAQMVKEVASKTSDNAGDGTTTATVLAQSIVREGMKYVASGMNPMDLKRGIDKAVAAAVEELKKISKPCTTNKEIAQVGSISANSDTSIGDRIAEAMDKVGKEGVITVEDGKSLADELDVVEGMQFDRGYLSPYFINNPEKQVAVLDNPFVLLHDKKVSNIRDLLPVLEQVAKAGRPLLIIAEDIEGEALATLVVNNIRGILKTVAVKAPGFGDRRKAMLEDIAILTGGQVIAEETGLTLEKATLAELGQAKRIEVGKENTTIIDGAGEAASIEARVKQVRAQIEEATSDYDREKLQERVAKLAGGVAVIKVGAATEVEMKEKKARVEDALHATRAAVEEGIVAGGGVALIRARTAIASLTGANADQNAGIKIVLRAMEEPLRQIVTNGGEEASVVVAAVAAGQGNYGYNAATGEYVDMVEAGVVDPTKVTRTALQNAASVAGLLLTTDAAVAELPKEDAPMPGGMPGGMGGMGMDM</sequence>
<dbReference type="EC" id="5.6.1.7" evidence="1"/>
<dbReference type="EMBL" id="CP000440">
    <property type="protein sequence ID" value="ABI86292.1"/>
    <property type="molecule type" value="Genomic_DNA"/>
</dbReference>
<dbReference type="SMR" id="Q0BHT1"/>
<dbReference type="KEGG" id="bam:Bamb_0733"/>
<dbReference type="PATRIC" id="fig|339670.21.peg.861"/>
<dbReference type="eggNOG" id="COG0459">
    <property type="taxonomic scope" value="Bacteria"/>
</dbReference>
<dbReference type="Proteomes" id="UP000000662">
    <property type="component" value="Chromosome 1"/>
</dbReference>
<dbReference type="GO" id="GO:0005737">
    <property type="term" value="C:cytoplasm"/>
    <property type="evidence" value="ECO:0007669"/>
    <property type="project" value="UniProtKB-SubCell"/>
</dbReference>
<dbReference type="GO" id="GO:0005524">
    <property type="term" value="F:ATP binding"/>
    <property type="evidence" value="ECO:0007669"/>
    <property type="project" value="UniProtKB-UniRule"/>
</dbReference>
<dbReference type="GO" id="GO:0140662">
    <property type="term" value="F:ATP-dependent protein folding chaperone"/>
    <property type="evidence" value="ECO:0007669"/>
    <property type="project" value="InterPro"/>
</dbReference>
<dbReference type="GO" id="GO:0016853">
    <property type="term" value="F:isomerase activity"/>
    <property type="evidence" value="ECO:0007669"/>
    <property type="project" value="UniProtKB-KW"/>
</dbReference>
<dbReference type="GO" id="GO:0051082">
    <property type="term" value="F:unfolded protein binding"/>
    <property type="evidence" value="ECO:0007669"/>
    <property type="project" value="UniProtKB-UniRule"/>
</dbReference>
<dbReference type="GO" id="GO:0042026">
    <property type="term" value="P:protein refolding"/>
    <property type="evidence" value="ECO:0007669"/>
    <property type="project" value="UniProtKB-UniRule"/>
</dbReference>
<dbReference type="CDD" id="cd03344">
    <property type="entry name" value="GroEL"/>
    <property type="match status" value="1"/>
</dbReference>
<dbReference type="FunFam" id="1.10.560.10:FF:000001">
    <property type="entry name" value="60 kDa chaperonin"/>
    <property type="match status" value="1"/>
</dbReference>
<dbReference type="FunFam" id="3.50.7.10:FF:000001">
    <property type="entry name" value="60 kDa chaperonin"/>
    <property type="match status" value="1"/>
</dbReference>
<dbReference type="Gene3D" id="3.50.7.10">
    <property type="entry name" value="GroEL"/>
    <property type="match status" value="1"/>
</dbReference>
<dbReference type="Gene3D" id="1.10.560.10">
    <property type="entry name" value="GroEL-like equatorial domain"/>
    <property type="match status" value="1"/>
</dbReference>
<dbReference type="Gene3D" id="3.30.260.10">
    <property type="entry name" value="TCP-1-like chaperonin intermediate domain"/>
    <property type="match status" value="1"/>
</dbReference>
<dbReference type="HAMAP" id="MF_00600">
    <property type="entry name" value="CH60"/>
    <property type="match status" value="1"/>
</dbReference>
<dbReference type="InterPro" id="IPR018370">
    <property type="entry name" value="Chaperonin_Cpn60_CS"/>
</dbReference>
<dbReference type="InterPro" id="IPR001844">
    <property type="entry name" value="Cpn60/GroEL"/>
</dbReference>
<dbReference type="InterPro" id="IPR002423">
    <property type="entry name" value="Cpn60/GroEL/TCP-1"/>
</dbReference>
<dbReference type="InterPro" id="IPR027409">
    <property type="entry name" value="GroEL-like_apical_dom_sf"/>
</dbReference>
<dbReference type="InterPro" id="IPR027413">
    <property type="entry name" value="GROEL-like_equatorial_sf"/>
</dbReference>
<dbReference type="InterPro" id="IPR027410">
    <property type="entry name" value="TCP-1-like_intermed_sf"/>
</dbReference>
<dbReference type="NCBIfam" id="TIGR02348">
    <property type="entry name" value="GroEL"/>
    <property type="match status" value="1"/>
</dbReference>
<dbReference type="NCBIfam" id="NF000592">
    <property type="entry name" value="PRK00013.1"/>
    <property type="match status" value="1"/>
</dbReference>
<dbReference type="NCBIfam" id="NF009487">
    <property type="entry name" value="PRK12849.1"/>
    <property type="match status" value="1"/>
</dbReference>
<dbReference type="NCBIfam" id="NF009488">
    <property type="entry name" value="PRK12850.1"/>
    <property type="match status" value="1"/>
</dbReference>
<dbReference type="NCBIfam" id="NF009489">
    <property type="entry name" value="PRK12851.1"/>
    <property type="match status" value="1"/>
</dbReference>
<dbReference type="PANTHER" id="PTHR45633">
    <property type="entry name" value="60 KDA HEAT SHOCK PROTEIN, MITOCHONDRIAL"/>
    <property type="match status" value="1"/>
</dbReference>
<dbReference type="Pfam" id="PF00118">
    <property type="entry name" value="Cpn60_TCP1"/>
    <property type="match status" value="1"/>
</dbReference>
<dbReference type="PRINTS" id="PR00298">
    <property type="entry name" value="CHAPERONIN60"/>
</dbReference>
<dbReference type="SUPFAM" id="SSF52029">
    <property type="entry name" value="GroEL apical domain-like"/>
    <property type="match status" value="1"/>
</dbReference>
<dbReference type="SUPFAM" id="SSF48592">
    <property type="entry name" value="GroEL equatorial domain-like"/>
    <property type="match status" value="1"/>
</dbReference>
<dbReference type="SUPFAM" id="SSF54849">
    <property type="entry name" value="GroEL-intermediate domain like"/>
    <property type="match status" value="1"/>
</dbReference>
<dbReference type="PROSITE" id="PS00296">
    <property type="entry name" value="CHAPERONINS_CPN60"/>
    <property type="match status" value="1"/>
</dbReference>
<proteinExistence type="inferred from homology"/>
<name>CH601_BURCM</name>
<organism>
    <name type="scientific">Burkholderia ambifaria (strain ATCC BAA-244 / DSM 16087 / CCUG 44356 / LMG 19182 / AMMD)</name>
    <name type="common">Burkholderia cepacia (strain AMMD)</name>
    <dbReference type="NCBI Taxonomy" id="339670"/>
    <lineage>
        <taxon>Bacteria</taxon>
        <taxon>Pseudomonadati</taxon>
        <taxon>Pseudomonadota</taxon>
        <taxon>Betaproteobacteria</taxon>
        <taxon>Burkholderiales</taxon>
        <taxon>Burkholderiaceae</taxon>
        <taxon>Burkholderia</taxon>
        <taxon>Burkholderia cepacia complex</taxon>
    </lineage>
</organism>
<feature type="chain" id="PRO_0000331984" description="Chaperonin GroEL 1">
    <location>
        <begin position="1"/>
        <end position="546"/>
    </location>
</feature>
<feature type="region of interest" description="Disordered" evidence="2">
    <location>
        <begin position="526"/>
        <end position="546"/>
    </location>
</feature>
<feature type="compositionally biased region" description="Gly residues" evidence="2">
    <location>
        <begin position="534"/>
        <end position="546"/>
    </location>
</feature>
<feature type="binding site" evidence="1">
    <location>
        <begin position="30"/>
        <end position="33"/>
    </location>
    <ligand>
        <name>ATP</name>
        <dbReference type="ChEBI" id="CHEBI:30616"/>
    </ligand>
</feature>
<feature type="binding site" evidence="1">
    <location>
        <position position="51"/>
    </location>
    <ligand>
        <name>ATP</name>
        <dbReference type="ChEBI" id="CHEBI:30616"/>
    </ligand>
</feature>
<feature type="binding site" evidence="1">
    <location>
        <begin position="87"/>
        <end position="91"/>
    </location>
    <ligand>
        <name>ATP</name>
        <dbReference type="ChEBI" id="CHEBI:30616"/>
    </ligand>
</feature>
<feature type="binding site" evidence="1">
    <location>
        <position position="415"/>
    </location>
    <ligand>
        <name>ATP</name>
        <dbReference type="ChEBI" id="CHEBI:30616"/>
    </ligand>
</feature>
<feature type="binding site" evidence="1">
    <location>
        <begin position="479"/>
        <end position="481"/>
    </location>
    <ligand>
        <name>ATP</name>
        <dbReference type="ChEBI" id="CHEBI:30616"/>
    </ligand>
</feature>
<feature type="binding site" evidence="1">
    <location>
        <position position="495"/>
    </location>
    <ligand>
        <name>ATP</name>
        <dbReference type="ChEBI" id="CHEBI:30616"/>
    </ligand>
</feature>
<protein>
    <recommendedName>
        <fullName evidence="1">Chaperonin GroEL 1</fullName>
        <ecNumber evidence="1">5.6.1.7</ecNumber>
    </recommendedName>
    <alternativeName>
        <fullName evidence="1">60 kDa chaperonin 1</fullName>
    </alternativeName>
    <alternativeName>
        <fullName evidence="1">Chaperonin-60 1</fullName>
        <shortName evidence="1">Cpn60 1</shortName>
    </alternativeName>
</protein>